<gene>
    <name evidence="1" type="primary">uxaC</name>
    <name type="ordered locus">NT01EI_0502</name>
</gene>
<reference key="1">
    <citation type="submission" date="2009-03" db="EMBL/GenBank/DDBJ databases">
        <title>Complete genome sequence of Edwardsiella ictaluri 93-146.</title>
        <authorList>
            <person name="Williams M.L."/>
            <person name="Gillaspy A.F."/>
            <person name="Dyer D.W."/>
            <person name="Thune R.L."/>
            <person name="Waldbieser G.C."/>
            <person name="Schuster S.C."/>
            <person name="Gipson J."/>
            <person name="Zaitshik J."/>
            <person name="Landry C."/>
            <person name="Lawrence M.L."/>
        </authorList>
    </citation>
    <scope>NUCLEOTIDE SEQUENCE [LARGE SCALE GENOMIC DNA]</scope>
    <source>
        <strain>93-146</strain>
    </source>
</reference>
<accession>C5BH54</accession>
<organism>
    <name type="scientific">Edwardsiella ictaluri (strain 93-146)</name>
    <dbReference type="NCBI Taxonomy" id="634503"/>
    <lineage>
        <taxon>Bacteria</taxon>
        <taxon>Pseudomonadati</taxon>
        <taxon>Pseudomonadota</taxon>
        <taxon>Gammaproteobacteria</taxon>
        <taxon>Enterobacterales</taxon>
        <taxon>Hafniaceae</taxon>
        <taxon>Edwardsiella</taxon>
    </lineage>
</organism>
<comment type="catalytic activity">
    <reaction evidence="1">
        <text>D-glucuronate = D-fructuronate</text>
        <dbReference type="Rhea" id="RHEA:13049"/>
        <dbReference type="ChEBI" id="CHEBI:58720"/>
        <dbReference type="ChEBI" id="CHEBI:59863"/>
        <dbReference type="EC" id="5.3.1.12"/>
    </reaction>
</comment>
<comment type="catalytic activity">
    <reaction evidence="1">
        <text>aldehydo-D-galacturonate = keto-D-tagaturonate</text>
        <dbReference type="Rhea" id="RHEA:27702"/>
        <dbReference type="ChEBI" id="CHEBI:12952"/>
        <dbReference type="ChEBI" id="CHEBI:17886"/>
        <dbReference type="EC" id="5.3.1.12"/>
    </reaction>
</comment>
<comment type="pathway">
    <text evidence="1">Carbohydrate metabolism; pentose and glucuronate interconversion.</text>
</comment>
<comment type="similarity">
    <text evidence="1">Belongs to the metallo-dependent hydrolases superfamily. Uronate isomerase family.</text>
</comment>
<name>UXAC_EDWI9</name>
<proteinExistence type="inferred from homology"/>
<evidence type="ECO:0000255" key="1">
    <source>
        <dbReference type="HAMAP-Rule" id="MF_00675"/>
    </source>
</evidence>
<feature type="chain" id="PRO_1000212517" description="Uronate isomerase">
    <location>
        <begin position="1"/>
        <end position="469"/>
    </location>
</feature>
<keyword id="KW-0413">Isomerase</keyword>
<sequence length="469" mass="53292">MSPFLTEDFLLDTEFARRLYHDYAEEQPIFDYHCHLPPEQIAENYRFKNLYDIWLKGDHYKWRAMRTNGVAECFCTGEASDREKFQAWAETVPHTIGNPLYHWTHLELRRPFGITDTLLSATTAEDIWTRCNRMLAEDSFTARGIMGQMNVKMVGTTDDPIDDLRHHRTIAADSSFTTKVLPSWRPDKAFNIEAALFSDYIVKLGAVADVDITRFADLCQALKVRMDHFAAHGCKVSDHALDVVVYGEADDATLDGILARRLSGGTPGEIEVAQFKTAVLLFLGCEYRRRGWVQQYHIGALRNNNTPMFERLGPDIGFDSINDAPVAQPLSRLLDAQSRNGGLTKTILYCLNPRDNEVLGTMIGNFQGEGMPGKMQFGSGWWFNDQKDGMQRQMTQLAQLGLLSRFVGMLTDSRSFLSYTRHEYFRRILCQMIGRWVAQGEAPADIALLGSMVKNICFDNAKSYFAIEL</sequence>
<protein>
    <recommendedName>
        <fullName evidence="1">Uronate isomerase</fullName>
        <ecNumber evidence="1">5.3.1.12</ecNumber>
    </recommendedName>
    <alternativeName>
        <fullName evidence="1">Glucuronate isomerase</fullName>
    </alternativeName>
    <alternativeName>
        <fullName evidence="1">Uronic isomerase</fullName>
    </alternativeName>
</protein>
<dbReference type="EC" id="5.3.1.12" evidence="1"/>
<dbReference type="EMBL" id="CP001600">
    <property type="protein sequence ID" value="ACR67737.1"/>
    <property type="molecule type" value="Genomic_DNA"/>
</dbReference>
<dbReference type="RefSeq" id="WP_015869938.1">
    <property type="nucleotide sequence ID" value="NZ_CP169062.1"/>
</dbReference>
<dbReference type="SMR" id="C5BH54"/>
<dbReference type="STRING" id="67780.B6E78_13235"/>
<dbReference type="GeneID" id="69537584"/>
<dbReference type="KEGG" id="eic:NT01EI_0502"/>
<dbReference type="PATRIC" id="fig|634503.3.peg.455"/>
<dbReference type="HOGENOM" id="CLU_044465_1_0_6"/>
<dbReference type="OrthoDB" id="9766564at2"/>
<dbReference type="UniPathway" id="UPA00246"/>
<dbReference type="Proteomes" id="UP000001485">
    <property type="component" value="Chromosome"/>
</dbReference>
<dbReference type="GO" id="GO:0008880">
    <property type="term" value="F:glucuronate isomerase activity"/>
    <property type="evidence" value="ECO:0007669"/>
    <property type="project" value="UniProtKB-UniRule"/>
</dbReference>
<dbReference type="GO" id="GO:0019698">
    <property type="term" value="P:D-galacturonate catabolic process"/>
    <property type="evidence" value="ECO:0007669"/>
    <property type="project" value="TreeGrafter"/>
</dbReference>
<dbReference type="GO" id="GO:0042840">
    <property type="term" value="P:D-glucuronate catabolic process"/>
    <property type="evidence" value="ECO:0007669"/>
    <property type="project" value="TreeGrafter"/>
</dbReference>
<dbReference type="Gene3D" id="3.20.20.140">
    <property type="entry name" value="Metal-dependent hydrolases"/>
    <property type="match status" value="1"/>
</dbReference>
<dbReference type="Gene3D" id="1.10.2020.10">
    <property type="entry name" value="uronate isomerase, domain 2, chain A"/>
    <property type="match status" value="1"/>
</dbReference>
<dbReference type="HAMAP" id="MF_00675">
    <property type="entry name" value="UxaC"/>
    <property type="match status" value="1"/>
</dbReference>
<dbReference type="InterPro" id="IPR032466">
    <property type="entry name" value="Metal_Hydrolase"/>
</dbReference>
<dbReference type="InterPro" id="IPR003766">
    <property type="entry name" value="Uronate_isomerase"/>
</dbReference>
<dbReference type="NCBIfam" id="NF002794">
    <property type="entry name" value="PRK02925.1"/>
    <property type="match status" value="1"/>
</dbReference>
<dbReference type="PANTHER" id="PTHR30068">
    <property type="entry name" value="URONATE ISOMERASE"/>
    <property type="match status" value="1"/>
</dbReference>
<dbReference type="PANTHER" id="PTHR30068:SF4">
    <property type="entry name" value="URONATE ISOMERASE"/>
    <property type="match status" value="1"/>
</dbReference>
<dbReference type="Pfam" id="PF02614">
    <property type="entry name" value="UxaC"/>
    <property type="match status" value="1"/>
</dbReference>
<dbReference type="SUPFAM" id="SSF51556">
    <property type="entry name" value="Metallo-dependent hydrolases"/>
    <property type="match status" value="1"/>
</dbReference>